<organism>
    <name type="scientific">Bacteroides thetaiotaomicron (strain ATCC 29148 / DSM 2079 / JCM 5827 / CCUG 10774 / NCTC 10582 / VPI-5482 / E50)</name>
    <dbReference type="NCBI Taxonomy" id="226186"/>
    <lineage>
        <taxon>Bacteria</taxon>
        <taxon>Pseudomonadati</taxon>
        <taxon>Bacteroidota</taxon>
        <taxon>Bacteroidia</taxon>
        <taxon>Bacteroidales</taxon>
        <taxon>Bacteroidaceae</taxon>
        <taxon>Bacteroides</taxon>
    </lineage>
</organism>
<proteinExistence type="inferred from homology"/>
<evidence type="ECO:0000255" key="1">
    <source>
        <dbReference type="HAMAP-Rule" id="MF_00208"/>
    </source>
</evidence>
<sequence>MLLNELLKAIQPVQVTGDSRIEITGVNIDSRLVEAGQLFMAMRGTQTDGHAYIPAAIQKGATAILCEDIPEEPVAGITYIQVKDSEDAVGKIATTFYGNPTSQFELVGVTGTNGKTTIATLLYNTFRYFGYKVGLISTVCNYIDDQPIPTEHTTPDPITLNRLLGQMADEGCKYVFMEVSSHSIAQKRISGLKFAGGIFTNLTRDHLDYHKTVENYLKAKKKFFDDMPKNAFSLTNLDDKNGLVMTQNTRSKVYTYSLRSLSDFKGRVIESHFEGMLLDFNNHELAVQFIGKFNASNLLAVFGAAVLLGKKEEDVLLALSTLHPVAGRFDAIRSPKGVTAIVDYAHTPDALVNVLNAIHGVLEGKGKVITVVGAGGNRDKGKRPIMAKEAAKASDRVIITSDNPRFEEPQEIINDMLAGLDAEDMKKTLSIADRKEAIRTACMLAEKGDVILVAGKGHENYQEIKGVKHHFDDKEVLKEIFN</sequence>
<dbReference type="EC" id="6.3.2.13" evidence="1"/>
<dbReference type="EMBL" id="AE015928">
    <property type="protein sequence ID" value="AAO78558.1"/>
    <property type="molecule type" value="Genomic_DNA"/>
</dbReference>
<dbReference type="RefSeq" id="NP_812364.1">
    <property type="nucleotide sequence ID" value="NC_004663.1"/>
</dbReference>
<dbReference type="RefSeq" id="WP_011108839.1">
    <property type="nucleotide sequence ID" value="NC_004663.1"/>
</dbReference>
<dbReference type="SMR" id="Q8A254"/>
<dbReference type="FunCoup" id="Q8A254">
    <property type="interactions" value="527"/>
</dbReference>
<dbReference type="STRING" id="226186.BT_3452"/>
<dbReference type="PaxDb" id="226186-BT_3452"/>
<dbReference type="EnsemblBacteria" id="AAO78558">
    <property type="protein sequence ID" value="AAO78558"/>
    <property type="gene ID" value="BT_3452"/>
</dbReference>
<dbReference type="KEGG" id="bth:BT_3452"/>
<dbReference type="PATRIC" id="fig|226186.12.peg.3519"/>
<dbReference type="eggNOG" id="COG0769">
    <property type="taxonomic scope" value="Bacteria"/>
</dbReference>
<dbReference type="HOGENOM" id="CLU_022291_4_1_10"/>
<dbReference type="InParanoid" id="Q8A254"/>
<dbReference type="OrthoDB" id="9800958at2"/>
<dbReference type="UniPathway" id="UPA00219"/>
<dbReference type="Proteomes" id="UP000001414">
    <property type="component" value="Chromosome"/>
</dbReference>
<dbReference type="GO" id="GO:0005737">
    <property type="term" value="C:cytoplasm"/>
    <property type="evidence" value="ECO:0007669"/>
    <property type="project" value="UniProtKB-SubCell"/>
</dbReference>
<dbReference type="GO" id="GO:0005524">
    <property type="term" value="F:ATP binding"/>
    <property type="evidence" value="ECO:0007669"/>
    <property type="project" value="UniProtKB-UniRule"/>
</dbReference>
<dbReference type="GO" id="GO:0000287">
    <property type="term" value="F:magnesium ion binding"/>
    <property type="evidence" value="ECO:0007669"/>
    <property type="project" value="UniProtKB-UniRule"/>
</dbReference>
<dbReference type="GO" id="GO:0008765">
    <property type="term" value="F:UDP-N-acetylmuramoylalanyl-D-glutamate-2,6-diaminopimelate ligase activity"/>
    <property type="evidence" value="ECO:0007669"/>
    <property type="project" value="UniProtKB-UniRule"/>
</dbReference>
<dbReference type="GO" id="GO:0051301">
    <property type="term" value="P:cell division"/>
    <property type="evidence" value="ECO:0007669"/>
    <property type="project" value="UniProtKB-KW"/>
</dbReference>
<dbReference type="GO" id="GO:0071555">
    <property type="term" value="P:cell wall organization"/>
    <property type="evidence" value="ECO:0007669"/>
    <property type="project" value="UniProtKB-KW"/>
</dbReference>
<dbReference type="GO" id="GO:0009252">
    <property type="term" value="P:peptidoglycan biosynthetic process"/>
    <property type="evidence" value="ECO:0007669"/>
    <property type="project" value="UniProtKB-UniRule"/>
</dbReference>
<dbReference type="GO" id="GO:0008360">
    <property type="term" value="P:regulation of cell shape"/>
    <property type="evidence" value="ECO:0007669"/>
    <property type="project" value="UniProtKB-KW"/>
</dbReference>
<dbReference type="Gene3D" id="3.90.190.20">
    <property type="entry name" value="Mur ligase, C-terminal domain"/>
    <property type="match status" value="1"/>
</dbReference>
<dbReference type="Gene3D" id="3.40.1190.10">
    <property type="entry name" value="Mur-like, catalytic domain"/>
    <property type="match status" value="1"/>
</dbReference>
<dbReference type="Gene3D" id="3.40.1390.10">
    <property type="entry name" value="MurE/MurF, N-terminal domain"/>
    <property type="match status" value="1"/>
</dbReference>
<dbReference type="HAMAP" id="MF_00208">
    <property type="entry name" value="MurE"/>
    <property type="match status" value="1"/>
</dbReference>
<dbReference type="InterPro" id="IPR036565">
    <property type="entry name" value="Mur-like_cat_sf"/>
</dbReference>
<dbReference type="InterPro" id="IPR004101">
    <property type="entry name" value="Mur_ligase_C"/>
</dbReference>
<dbReference type="InterPro" id="IPR036615">
    <property type="entry name" value="Mur_ligase_C_dom_sf"/>
</dbReference>
<dbReference type="InterPro" id="IPR013221">
    <property type="entry name" value="Mur_ligase_cen"/>
</dbReference>
<dbReference type="InterPro" id="IPR000713">
    <property type="entry name" value="Mur_ligase_N"/>
</dbReference>
<dbReference type="InterPro" id="IPR035911">
    <property type="entry name" value="MurE/MurF_N"/>
</dbReference>
<dbReference type="InterPro" id="IPR005761">
    <property type="entry name" value="UDP-N-AcMur-Glu-dNH2Pim_ligase"/>
</dbReference>
<dbReference type="NCBIfam" id="TIGR01085">
    <property type="entry name" value="murE"/>
    <property type="match status" value="1"/>
</dbReference>
<dbReference type="NCBIfam" id="NF001124">
    <property type="entry name" value="PRK00139.1-2"/>
    <property type="match status" value="1"/>
</dbReference>
<dbReference type="NCBIfam" id="NF001126">
    <property type="entry name" value="PRK00139.1-4"/>
    <property type="match status" value="1"/>
</dbReference>
<dbReference type="PANTHER" id="PTHR23135">
    <property type="entry name" value="MUR LIGASE FAMILY MEMBER"/>
    <property type="match status" value="1"/>
</dbReference>
<dbReference type="PANTHER" id="PTHR23135:SF4">
    <property type="entry name" value="UDP-N-ACETYLMURAMOYL-L-ALANYL-D-GLUTAMATE--2,6-DIAMINOPIMELATE LIGASE MURE HOMOLOG, CHLOROPLASTIC"/>
    <property type="match status" value="1"/>
</dbReference>
<dbReference type="Pfam" id="PF01225">
    <property type="entry name" value="Mur_ligase"/>
    <property type="match status" value="1"/>
</dbReference>
<dbReference type="Pfam" id="PF02875">
    <property type="entry name" value="Mur_ligase_C"/>
    <property type="match status" value="1"/>
</dbReference>
<dbReference type="Pfam" id="PF08245">
    <property type="entry name" value="Mur_ligase_M"/>
    <property type="match status" value="1"/>
</dbReference>
<dbReference type="SUPFAM" id="SSF53623">
    <property type="entry name" value="MurD-like peptide ligases, catalytic domain"/>
    <property type="match status" value="1"/>
</dbReference>
<dbReference type="SUPFAM" id="SSF53244">
    <property type="entry name" value="MurD-like peptide ligases, peptide-binding domain"/>
    <property type="match status" value="1"/>
</dbReference>
<dbReference type="SUPFAM" id="SSF63418">
    <property type="entry name" value="MurE/MurF N-terminal domain"/>
    <property type="match status" value="1"/>
</dbReference>
<name>MURE_BACTN</name>
<comment type="function">
    <text evidence="1">Catalyzes the addition of meso-diaminopimelic acid to the nucleotide precursor UDP-N-acetylmuramoyl-L-alanyl-D-glutamate (UMAG) in the biosynthesis of bacterial cell-wall peptidoglycan.</text>
</comment>
<comment type="catalytic activity">
    <reaction evidence="1">
        <text>UDP-N-acetyl-alpha-D-muramoyl-L-alanyl-D-glutamate + meso-2,6-diaminopimelate + ATP = UDP-N-acetyl-alpha-D-muramoyl-L-alanyl-gamma-D-glutamyl-meso-2,6-diaminopimelate + ADP + phosphate + H(+)</text>
        <dbReference type="Rhea" id="RHEA:23676"/>
        <dbReference type="ChEBI" id="CHEBI:15378"/>
        <dbReference type="ChEBI" id="CHEBI:30616"/>
        <dbReference type="ChEBI" id="CHEBI:43474"/>
        <dbReference type="ChEBI" id="CHEBI:57791"/>
        <dbReference type="ChEBI" id="CHEBI:83900"/>
        <dbReference type="ChEBI" id="CHEBI:83905"/>
        <dbReference type="ChEBI" id="CHEBI:456216"/>
        <dbReference type="EC" id="6.3.2.13"/>
    </reaction>
</comment>
<comment type="cofactor">
    <cofactor evidence="1">
        <name>Mg(2+)</name>
        <dbReference type="ChEBI" id="CHEBI:18420"/>
    </cofactor>
</comment>
<comment type="pathway">
    <text evidence="1">Cell wall biogenesis; peptidoglycan biosynthesis.</text>
</comment>
<comment type="subcellular location">
    <subcellularLocation>
        <location evidence="1">Cytoplasm</location>
    </subcellularLocation>
</comment>
<comment type="PTM">
    <text evidence="1">Carboxylation is probably crucial for Mg(2+) binding and, consequently, for the gamma-phosphate positioning of ATP.</text>
</comment>
<comment type="similarity">
    <text evidence="1">Belongs to the MurCDEF family. MurE subfamily.</text>
</comment>
<keyword id="KW-0067">ATP-binding</keyword>
<keyword id="KW-0131">Cell cycle</keyword>
<keyword id="KW-0132">Cell division</keyword>
<keyword id="KW-0133">Cell shape</keyword>
<keyword id="KW-0961">Cell wall biogenesis/degradation</keyword>
<keyword id="KW-0963">Cytoplasm</keyword>
<keyword id="KW-0436">Ligase</keyword>
<keyword id="KW-0460">Magnesium</keyword>
<keyword id="KW-0547">Nucleotide-binding</keyword>
<keyword id="KW-0573">Peptidoglycan synthesis</keyword>
<keyword id="KW-1185">Reference proteome</keyword>
<gene>
    <name evidence="1" type="primary">murE</name>
    <name type="ordered locus">BT_3452</name>
</gene>
<feature type="chain" id="PRO_0000101867" description="UDP-N-acetylmuramoyl-L-alanyl-D-glutamate--2,6-diaminopimelate ligase">
    <location>
        <begin position="1"/>
        <end position="482"/>
    </location>
</feature>
<feature type="short sequence motif" description="Meso-diaminopimelate recognition motif">
    <location>
        <begin position="402"/>
        <end position="405"/>
    </location>
</feature>
<feature type="binding site" evidence="1">
    <location>
        <position position="30"/>
    </location>
    <ligand>
        <name>UDP-N-acetyl-alpha-D-muramoyl-L-alanyl-D-glutamate</name>
        <dbReference type="ChEBI" id="CHEBI:83900"/>
    </ligand>
</feature>
<feature type="binding site" evidence="1">
    <location>
        <begin position="111"/>
        <end position="117"/>
    </location>
    <ligand>
        <name>ATP</name>
        <dbReference type="ChEBI" id="CHEBI:30616"/>
    </ligand>
</feature>
<feature type="binding site" evidence="1">
    <location>
        <begin position="153"/>
        <end position="154"/>
    </location>
    <ligand>
        <name>UDP-N-acetyl-alpha-D-muramoyl-L-alanyl-D-glutamate</name>
        <dbReference type="ChEBI" id="CHEBI:83900"/>
    </ligand>
</feature>
<feature type="binding site" evidence="1">
    <location>
        <position position="180"/>
    </location>
    <ligand>
        <name>UDP-N-acetyl-alpha-D-muramoyl-L-alanyl-D-glutamate</name>
        <dbReference type="ChEBI" id="CHEBI:83900"/>
    </ligand>
</feature>
<feature type="binding site" evidence="1">
    <location>
        <position position="186"/>
    </location>
    <ligand>
        <name>UDP-N-acetyl-alpha-D-muramoyl-L-alanyl-D-glutamate</name>
        <dbReference type="ChEBI" id="CHEBI:83900"/>
    </ligand>
</feature>
<feature type="binding site" evidence="1">
    <location>
        <position position="188"/>
    </location>
    <ligand>
        <name>UDP-N-acetyl-alpha-D-muramoyl-L-alanyl-D-glutamate</name>
        <dbReference type="ChEBI" id="CHEBI:83900"/>
    </ligand>
</feature>
<feature type="binding site" evidence="1">
    <location>
        <position position="378"/>
    </location>
    <ligand>
        <name>meso-2,6-diaminopimelate</name>
        <dbReference type="ChEBI" id="CHEBI:57791"/>
    </ligand>
</feature>
<feature type="binding site" evidence="1">
    <location>
        <begin position="402"/>
        <end position="405"/>
    </location>
    <ligand>
        <name>meso-2,6-diaminopimelate</name>
        <dbReference type="ChEBI" id="CHEBI:57791"/>
    </ligand>
</feature>
<feature type="binding site" evidence="1">
    <location>
        <position position="455"/>
    </location>
    <ligand>
        <name>meso-2,6-diaminopimelate</name>
        <dbReference type="ChEBI" id="CHEBI:57791"/>
    </ligand>
</feature>
<feature type="binding site" evidence="1">
    <location>
        <position position="459"/>
    </location>
    <ligand>
        <name>meso-2,6-diaminopimelate</name>
        <dbReference type="ChEBI" id="CHEBI:57791"/>
    </ligand>
</feature>
<feature type="modified residue" description="N6-carboxylysine" evidence="1">
    <location>
        <position position="220"/>
    </location>
</feature>
<protein>
    <recommendedName>
        <fullName evidence="1">UDP-N-acetylmuramoyl-L-alanyl-D-glutamate--2,6-diaminopimelate ligase</fullName>
        <ecNumber evidence="1">6.3.2.13</ecNumber>
    </recommendedName>
    <alternativeName>
        <fullName evidence="1">Meso-A2pm-adding enzyme</fullName>
    </alternativeName>
    <alternativeName>
        <fullName evidence="1">Meso-diaminopimelate-adding enzyme</fullName>
    </alternativeName>
    <alternativeName>
        <fullName evidence="1">UDP-MurNAc-L-Ala-D-Glu:meso-diaminopimelate ligase</fullName>
    </alternativeName>
    <alternativeName>
        <fullName evidence="1">UDP-MurNAc-tripeptide synthetase</fullName>
    </alternativeName>
    <alternativeName>
        <fullName evidence="1">UDP-N-acetylmuramyl-tripeptide synthetase</fullName>
    </alternativeName>
</protein>
<reference key="1">
    <citation type="journal article" date="2003" name="Science">
        <title>A genomic view of the human-Bacteroides thetaiotaomicron symbiosis.</title>
        <authorList>
            <person name="Xu J."/>
            <person name="Bjursell M.K."/>
            <person name="Himrod J."/>
            <person name="Deng S."/>
            <person name="Carmichael L.K."/>
            <person name="Chiang H.C."/>
            <person name="Hooper L.V."/>
            <person name="Gordon J.I."/>
        </authorList>
    </citation>
    <scope>NUCLEOTIDE SEQUENCE [LARGE SCALE GENOMIC DNA]</scope>
    <source>
        <strain>ATCC 29148 / DSM 2079 / JCM 5827 / CCUG 10774 / NCTC 10582 / VPI-5482 / E50</strain>
    </source>
</reference>
<accession>Q8A254</accession>